<name>AZOR_STAA8</name>
<organism>
    <name type="scientific">Staphylococcus aureus (strain NCTC 8325 / PS 47)</name>
    <dbReference type="NCBI Taxonomy" id="93061"/>
    <lineage>
        <taxon>Bacteria</taxon>
        <taxon>Bacillati</taxon>
        <taxon>Bacillota</taxon>
        <taxon>Bacilli</taxon>
        <taxon>Bacillales</taxon>
        <taxon>Staphylococcaceae</taxon>
        <taxon>Staphylococcus</taxon>
    </lineage>
</organism>
<keyword id="KW-0285">Flavoprotein</keyword>
<keyword id="KW-0288">FMN</keyword>
<keyword id="KW-0520">NAD</keyword>
<keyword id="KW-0560">Oxidoreductase</keyword>
<keyword id="KW-1185">Reference proteome</keyword>
<dbReference type="EC" id="1.6.5.-" evidence="1"/>
<dbReference type="EC" id="1.7.1.17" evidence="1"/>
<dbReference type="EMBL" id="CP000253">
    <property type="protein sequence ID" value="ABD29351.1"/>
    <property type="molecule type" value="Genomic_DNA"/>
</dbReference>
<dbReference type="RefSeq" id="WP_001151451.1">
    <property type="nucleotide sequence ID" value="NZ_LS483365.1"/>
</dbReference>
<dbReference type="RefSeq" id="YP_498770.1">
    <property type="nucleotide sequence ID" value="NC_007795.1"/>
</dbReference>
<dbReference type="SMR" id="Q2G1F2"/>
<dbReference type="STRING" id="93061.SAOUHSC_00173"/>
<dbReference type="PaxDb" id="1280-SAXN108_0187"/>
<dbReference type="GeneID" id="3919487"/>
<dbReference type="KEGG" id="sao:SAOUHSC_00173"/>
<dbReference type="PATRIC" id="fig|93061.5.peg.161"/>
<dbReference type="eggNOG" id="COG1182">
    <property type="taxonomic scope" value="Bacteria"/>
</dbReference>
<dbReference type="HOGENOM" id="CLU_088964_3_1_9"/>
<dbReference type="OrthoDB" id="9805013at2"/>
<dbReference type="PRO" id="PR:Q2G1F2"/>
<dbReference type="Proteomes" id="UP000008816">
    <property type="component" value="Chromosome"/>
</dbReference>
<dbReference type="GO" id="GO:0009055">
    <property type="term" value="F:electron transfer activity"/>
    <property type="evidence" value="ECO:0007669"/>
    <property type="project" value="UniProtKB-UniRule"/>
</dbReference>
<dbReference type="GO" id="GO:0010181">
    <property type="term" value="F:FMN binding"/>
    <property type="evidence" value="ECO:0007669"/>
    <property type="project" value="UniProtKB-UniRule"/>
</dbReference>
<dbReference type="GO" id="GO:0016652">
    <property type="term" value="F:oxidoreductase activity, acting on NAD(P)H as acceptor"/>
    <property type="evidence" value="ECO:0007669"/>
    <property type="project" value="UniProtKB-UniRule"/>
</dbReference>
<dbReference type="GO" id="GO:0016655">
    <property type="term" value="F:oxidoreductase activity, acting on NAD(P)H, quinone or similar compound as acceptor"/>
    <property type="evidence" value="ECO:0007669"/>
    <property type="project" value="InterPro"/>
</dbReference>
<dbReference type="Gene3D" id="3.40.50.360">
    <property type="match status" value="1"/>
</dbReference>
<dbReference type="HAMAP" id="MF_01216">
    <property type="entry name" value="Azoreductase_type1"/>
    <property type="match status" value="1"/>
</dbReference>
<dbReference type="InterPro" id="IPR003680">
    <property type="entry name" value="Flavodoxin_fold"/>
</dbReference>
<dbReference type="InterPro" id="IPR029039">
    <property type="entry name" value="Flavoprotein-like_sf"/>
</dbReference>
<dbReference type="InterPro" id="IPR050104">
    <property type="entry name" value="FMN-dep_NADH:Q_OxRdtase_AzoR1"/>
</dbReference>
<dbReference type="InterPro" id="IPR023048">
    <property type="entry name" value="NADH:quinone_OxRdtase_FMN_depd"/>
</dbReference>
<dbReference type="NCBIfam" id="NF010075">
    <property type="entry name" value="PRK13556.1"/>
    <property type="match status" value="1"/>
</dbReference>
<dbReference type="PANTHER" id="PTHR43741">
    <property type="entry name" value="FMN-DEPENDENT NADH-AZOREDUCTASE 1"/>
    <property type="match status" value="1"/>
</dbReference>
<dbReference type="PANTHER" id="PTHR43741:SF7">
    <property type="entry name" value="FMN-DEPENDENT NADH:QUINONE OXIDOREDUCTASE"/>
    <property type="match status" value="1"/>
</dbReference>
<dbReference type="Pfam" id="PF02525">
    <property type="entry name" value="Flavodoxin_2"/>
    <property type="match status" value="1"/>
</dbReference>
<dbReference type="SUPFAM" id="SSF52218">
    <property type="entry name" value="Flavoproteins"/>
    <property type="match status" value="1"/>
</dbReference>
<evidence type="ECO:0000255" key="1">
    <source>
        <dbReference type="HAMAP-Rule" id="MF_01216"/>
    </source>
</evidence>
<gene>
    <name evidence="1" type="primary">azoR</name>
    <name type="ordered locus">SAOUHSC_00173</name>
</gene>
<accession>Q2G1F2</accession>
<protein>
    <recommendedName>
        <fullName evidence="1">FMN-dependent NADH:quinone oxidoreductase</fullName>
        <ecNumber evidence="1">1.6.5.-</ecNumber>
    </recommendedName>
    <alternativeName>
        <fullName evidence="1">Azo-dye reductase</fullName>
    </alternativeName>
    <alternativeName>
        <fullName evidence="1">FMN-dependent NADH-azo compound oxidoreductase</fullName>
    </alternativeName>
    <alternativeName>
        <fullName evidence="1">FMN-dependent NADH-azoreductase</fullName>
        <ecNumber evidence="1">1.7.1.17</ecNumber>
    </alternativeName>
</protein>
<sequence>MAKVLYITAHPFNELVSNSMAAGKAFIETYQQQHPDDEVKHIDLFETYIPVIDKDVLTGWGKMSNGETLTDDEQMKVSRLSDILEEFLSADKYVFVTPMWNLSFPPVVKAYIDAISIAGKTFKYSAEGPQGLLTDKKVLHIQSRGGYYTEGPAADFEMGDRYLRTIMTFLGVPSYETIIIEGHNAEPHKTEEIKATSINNAEKLATTF</sequence>
<feature type="chain" id="PRO_0000245976" description="FMN-dependent NADH:quinone oxidoreductase">
    <location>
        <begin position="1"/>
        <end position="208"/>
    </location>
</feature>
<feature type="binding site" evidence="1">
    <location>
        <begin position="17"/>
        <end position="19"/>
    </location>
    <ligand>
        <name>FMN</name>
        <dbReference type="ChEBI" id="CHEBI:58210"/>
    </ligand>
</feature>
<feature type="binding site" evidence="1">
    <location>
        <begin position="99"/>
        <end position="102"/>
    </location>
    <ligand>
        <name>FMN</name>
        <dbReference type="ChEBI" id="CHEBI:58210"/>
    </ligand>
</feature>
<feature type="binding site" evidence="1">
    <location>
        <begin position="143"/>
        <end position="146"/>
    </location>
    <ligand>
        <name>FMN</name>
        <dbReference type="ChEBI" id="CHEBI:58210"/>
    </ligand>
</feature>
<proteinExistence type="inferred from homology"/>
<comment type="function">
    <text evidence="1">Quinone reductase that provides resistance to thiol-specific stress caused by electrophilic quinones.</text>
</comment>
<comment type="function">
    <text evidence="1">Also exhibits azoreductase activity. Catalyzes the reductive cleavage of the azo bond in aromatic azo compounds to the corresponding amines.</text>
</comment>
<comment type="catalytic activity">
    <reaction evidence="1">
        <text>2 a quinone + NADH + H(+) = 2 a 1,4-benzosemiquinone + NAD(+)</text>
        <dbReference type="Rhea" id="RHEA:65952"/>
        <dbReference type="ChEBI" id="CHEBI:15378"/>
        <dbReference type="ChEBI" id="CHEBI:57540"/>
        <dbReference type="ChEBI" id="CHEBI:57945"/>
        <dbReference type="ChEBI" id="CHEBI:132124"/>
        <dbReference type="ChEBI" id="CHEBI:134225"/>
    </reaction>
</comment>
<comment type="catalytic activity">
    <reaction evidence="1">
        <text>N,N-dimethyl-1,4-phenylenediamine + anthranilate + 2 NAD(+) = 2-(4-dimethylaminophenyl)diazenylbenzoate + 2 NADH + 2 H(+)</text>
        <dbReference type="Rhea" id="RHEA:55872"/>
        <dbReference type="ChEBI" id="CHEBI:15378"/>
        <dbReference type="ChEBI" id="CHEBI:15783"/>
        <dbReference type="ChEBI" id="CHEBI:16567"/>
        <dbReference type="ChEBI" id="CHEBI:57540"/>
        <dbReference type="ChEBI" id="CHEBI:57945"/>
        <dbReference type="ChEBI" id="CHEBI:71579"/>
        <dbReference type="EC" id="1.7.1.17"/>
    </reaction>
</comment>
<comment type="cofactor">
    <cofactor evidence="1">
        <name>FMN</name>
        <dbReference type="ChEBI" id="CHEBI:58210"/>
    </cofactor>
    <text evidence="1">Binds 1 FMN per subunit.</text>
</comment>
<comment type="subunit">
    <text evidence="1">Homodimer.</text>
</comment>
<comment type="similarity">
    <text evidence="1">Belongs to the azoreductase type 1 family.</text>
</comment>
<reference key="1">
    <citation type="book" date="2006" name="Gram positive pathogens, 2nd edition">
        <title>The Staphylococcus aureus NCTC 8325 genome.</title>
        <editorList>
            <person name="Fischetti V."/>
            <person name="Novick R."/>
            <person name="Ferretti J."/>
            <person name="Portnoy D."/>
            <person name="Rood J."/>
        </editorList>
        <authorList>
            <person name="Gillaspy A.F."/>
            <person name="Worrell V."/>
            <person name="Orvis J."/>
            <person name="Roe B.A."/>
            <person name="Dyer D.W."/>
            <person name="Iandolo J.J."/>
        </authorList>
    </citation>
    <scope>NUCLEOTIDE SEQUENCE [LARGE SCALE GENOMIC DNA]</scope>
    <source>
        <strain>NCTC 8325 / PS 47</strain>
    </source>
</reference>